<sequence length="189" mass="21957">MARLKTVQSKVTKSPRRPFEKERLDQELKLIGTFGLKNKREVWRVKYTLAKVRKAARELLTLEDKDPKRLFEGNALLRRLVKIGVLDETKMKLDYVLGLKVEDFLERRLQTQVFKLGLAKSIHHARILIKQHHIRVRRQVVDVPSFIVRLDSQKHIDFSLQSPYGGGRPGRVKRRTLRKGDGAGGDDEE</sequence>
<name>RS9_CAEEL</name>
<comment type="function">
    <text evidence="1">Component of the small ribosomal subunit. The ribosome is a large ribonucleoprotein complex responsible for the synthesis of proteins in the cell. Part of the small subunit (SSU) processome, first precursor of the small eukaryotic ribosomal subunit. During the assembly of the SSU processome in the nucleolus, many ribosome biogenesis factors, an RNA chaperone and ribosomal proteins associate with the nascent pre-rRNA and work in concert to generate RNA folding, modifications, rearrangements and cleavage as well as targeted degradation of pre-ribosomal RNA by the RNA exosome.</text>
</comment>
<comment type="subunit">
    <text evidence="1">Component of the small ribosomal subunit. Part of the small subunit (SSU) processome, composed of more than 70 proteins and the RNA chaperone small nucleolar RNA (snoRNA) U3.</text>
</comment>
<comment type="subcellular location">
    <subcellularLocation>
        <location evidence="1">Cytoplasm</location>
    </subcellularLocation>
    <subcellularLocation>
        <location evidence="1">Nucleus</location>
        <location evidence="1">Nucleolus</location>
    </subcellularLocation>
    <text evidence="1">Localized in cytoplasmic mRNP granules containing untranslated mRNAs.</text>
</comment>
<comment type="similarity">
    <text evidence="4">Belongs to the universal ribosomal protein uS4 family.</text>
</comment>
<accession>Q20228</accession>
<dbReference type="EMBL" id="Z69302">
    <property type="protein sequence ID" value="CAA93262.1"/>
    <property type="molecule type" value="Genomic_DNA"/>
</dbReference>
<dbReference type="PIR" id="T22034">
    <property type="entry name" value="T22034"/>
</dbReference>
<dbReference type="RefSeq" id="NP_496384.1">
    <property type="nucleotide sequence ID" value="NM_063983.6"/>
</dbReference>
<dbReference type="PDB" id="9BH5">
    <property type="method" value="EM"/>
    <property type="resolution" value="2.63 A"/>
    <property type="chains" value="AJ=1-189"/>
</dbReference>
<dbReference type="PDB" id="9CAI">
    <property type="method" value="EM"/>
    <property type="resolution" value="2.59 A"/>
    <property type="chains" value="AJ=1-189"/>
</dbReference>
<dbReference type="PDBsum" id="9BH5"/>
<dbReference type="PDBsum" id="9CAI"/>
<dbReference type="EMDB" id="EMD-44533"/>
<dbReference type="EMDB" id="EMD-45392"/>
<dbReference type="SMR" id="Q20228"/>
<dbReference type="BioGRID" id="40009">
    <property type="interactions" value="90"/>
</dbReference>
<dbReference type="DIP" id="DIP-25908N"/>
<dbReference type="FunCoup" id="Q20228">
    <property type="interactions" value="1961"/>
</dbReference>
<dbReference type="STRING" id="6239.F40F8.10.1"/>
<dbReference type="PaxDb" id="6239-F40F8.10"/>
<dbReference type="PeptideAtlas" id="Q20228"/>
<dbReference type="EnsemblMetazoa" id="F40F8.10.1">
    <property type="protein sequence ID" value="F40F8.10.1"/>
    <property type="gene ID" value="WBGene00004478"/>
</dbReference>
<dbReference type="GeneID" id="174699"/>
<dbReference type="KEGG" id="cel:CELE_F40F8.10"/>
<dbReference type="UCSC" id="F40F8.10.1">
    <property type="organism name" value="c. elegans"/>
</dbReference>
<dbReference type="AGR" id="WB:WBGene00004478"/>
<dbReference type="CTD" id="174699"/>
<dbReference type="WormBase" id="F40F8.10">
    <property type="protein sequence ID" value="CE05849"/>
    <property type="gene ID" value="WBGene00004478"/>
    <property type="gene designation" value="rps-9"/>
</dbReference>
<dbReference type="eggNOG" id="KOG3301">
    <property type="taxonomic scope" value="Eukaryota"/>
</dbReference>
<dbReference type="GeneTree" id="ENSGT00550000074829"/>
<dbReference type="HOGENOM" id="CLU_089738_0_0_1"/>
<dbReference type="InParanoid" id="Q20228"/>
<dbReference type="OMA" id="RQFITHG"/>
<dbReference type="OrthoDB" id="1697570at2759"/>
<dbReference type="PhylomeDB" id="Q20228"/>
<dbReference type="Reactome" id="R-CEL-156827">
    <property type="pathway name" value="L13a-mediated translational silencing of Ceruloplasmin expression"/>
</dbReference>
<dbReference type="Reactome" id="R-CEL-1799339">
    <property type="pathway name" value="SRP-dependent cotranslational protein targeting to membrane"/>
</dbReference>
<dbReference type="Reactome" id="R-CEL-6791226">
    <property type="pathway name" value="Major pathway of rRNA processing in the nucleolus and cytosol"/>
</dbReference>
<dbReference type="Reactome" id="R-CEL-72649">
    <property type="pathway name" value="Translation initiation complex formation"/>
</dbReference>
<dbReference type="Reactome" id="R-CEL-72689">
    <property type="pathway name" value="Formation of a pool of free 40S subunits"/>
</dbReference>
<dbReference type="Reactome" id="R-CEL-72695">
    <property type="pathway name" value="Formation of the ternary complex, and subsequently, the 43S complex"/>
</dbReference>
<dbReference type="Reactome" id="R-CEL-72702">
    <property type="pathway name" value="Ribosomal scanning and start codon recognition"/>
</dbReference>
<dbReference type="Reactome" id="R-CEL-72706">
    <property type="pathway name" value="GTP hydrolysis and joining of the 60S ribosomal subunit"/>
</dbReference>
<dbReference type="Reactome" id="R-CEL-975956">
    <property type="pathway name" value="Nonsense Mediated Decay (NMD) independent of the Exon Junction Complex (EJC)"/>
</dbReference>
<dbReference type="Reactome" id="R-CEL-975957">
    <property type="pathway name" value="Nonsense Mediated Decay (NMD) enhanced by the Exon Junction Complex (EJC)"/>
</dbReference>
<dbReference type="PRO" id="PR:Q20228"/>
<dbReference type="Proteomes" id="UP000001940">
    <property type="component" value="Chromosome II"/>
</dbReference>
<dbReference type="Bgee" id="WBGene00004478">
    <property type="expression patterns" value="Expressed in adult organism and 4 other cell types or tissues"/>
</dbReference>
<dbReference type="GO" id="GO:0022627">
    <property type="term" value="C:cytosolic small ribosomal subunit"/>
    <property type="evidence" value="ECO:0000318"/>
    <property type="project" value="GO_Central"/>
</dbReference>
<dbReference type="GO" id="GO:0005730">
    <property type="term" value="C:nucleolus"/>
    <property type="evidence" value="ECO:0007669"/>
    <property type="project" value="UniProtKB-SubCell"/>
</dbReference>
<dbReference type="GO" id="GO:0032040">
    <property type="term" value="C:small-subunit processome"/>
    <property type="evidence" value="ECO:0000250"/>
    <property type="project" value="UniProtKB"/>
</dbReference>
<dbReference type="GO" id="GO:0019843">
    <property type="term" value="F:rRNA binding"/>
    <property type="evidence" value="ECO:0000318"/>
    <property type="project" value="GO_Central"/>
</dbReference>
<dbReference type="GO" id="GO:0003735">
    <property type="term" value="F:structural constituent of ribosome"/>
    <property type="evidence" value="ECO:0000318"/>
    <property type="project" value="GO_Central"/>
</dbReference>
<dbReference type="GO" id="GO:0042274">
    <property type="term" value="P:ribosomal small subunit biogenesis"/>
    <property type="evidence" value="ECO:0000250"/>
    <property type="project" value="UniProtKB"/>
</dbReference>
<dbReference type="GO" id="GO:0006412">
    <property type="term" value="P:translation"/>
    <property type="evidence" value="ECO:0007669"/>
    <property type="project" value="InterPro"/>
</dbReference>
<dbReference type="CDD" id="cd00165">
    <property type="entry name" value="S4"/>
    <property type="match status" value="1"/>
</dbReference>
<dbReference type="FunFam" id="3.10.290.10:FF:000021">
    <property type="entry name" value="40S ribosomal protein S9"/>
    <property type="match status" value="1"/>
</dbReference>
<dbReference type="Gene3D" id="3.10.290.10">
    <property type="entry name" value="RNA-binding S4 domain"/>
    <property type="match status" value="1"/>
</dbReference>
<dbReference type="InterPro" id="IPR022801">
    <property type="entry name" value="Ribosomal_uS4"/>
</dbReference>
<dbReference type="InterPro" id="IPR018079">
    <property type="entry name" value="Ribosomal_uS4_CS"/>
</dbReference>
<dbReference type="InterPro" id="IPR005710">
    <property type="entry name" value="Ribosomal_uS4_euk/arc"/>
</dbReference>
<dbReference type="InterPro" id="IPR001912">
    <property type="entry name" value="Ribosomal_uS4_N"/>
</dbReference>
<dbReference type="InterPro" id="IPR002942">
    <property type="entry name" value="S4_RNA-bd"/>
</dbReference>
<dbReference type="InterPro" id="IPR036986">
    <property type="entry name" value="S4_RNA-bd_sf"/>
</dbReference>
<dbReference type="NCBIfam" id="NF003139">
    <property type="entry name" value="PRK04051.1"/>
    <property type="match status" value="1"/>
</dbReference>
<dbReference type="NCBIfam" id="TIGR01018">
    <property type="entry name" value="uS4_arch"/>
    <property type="match status" value="1"/>
</dbReference>
<dbReference type="PANTHER" id="PTHR11831">
    <property type="entry name" value="30S 40S RIBOSOMAL PROTEIN"/>
    <property type="match status" value="1"/>
</dbReference>
<dbReference type="PANTHER" id="PTHR11831:SF5">
    <property type="entry name" value="40S RIBOSOMAL PROTEIN S9"/>
    <property type="match status" value="1"/>
</dbReference>
<dbReference type="Pfam" id="PF00163">
    <property type="entry name" value="Ribosomal_S4"/>
    <property type="match status" value="1"/>
</dbReference>
<dbReference type="Pfam" id="PF01479">
    <property type="entry name" value="S4"/>
    <property type="match status" value="1"/>
</dbReference>
<dbReference type="SMART" id="SM01390">
    <property type="entry name" value="Ribosomal_S4"/>
    <property type="match status" value="1"/>
</dbReference>
<dbReference type="SUPFAM" id="SSF55174">
    <property type="entry name" value="Alpha-L RNA-binding motif"/>
    <property type="match status" value="1"/>
</dbReference>
<dbReference type="PROSITE" id="PS00632">
    <property type="entry name" value="RIBOSOMAL_S4"/>
    <property type="match status" value="1"/>
</dbReference>
<dbReference type="PROSITE" id="PS50889">
    <property type="entry name" value="S4"/>
    <property type="match status" value="1"/>
</dbReference>
<protein>
    <recommendedName>
        <fullName evidence="4">Small ribosomal subunit protein uS4</fullName>
    </recommendedName>
    <alternativeName>
        <fullName>40S ribosomal protein S9</fullName>
    </alternativeName>
</protein>
<reference key="1">
    <citation type="journal article" date="1998" name="Science">
        <title>Genome sequence of the nematode C. elegans: a platform for investigating biology.</title>
        <authorList>
            <consortium name="The C. elegans sequencing consortium"/>
        </authorList>
    </citation>
    <scope>NUCLEOTIDE SEQUENCE [LARGE SCALE GENOMIC DNA]</scope>
    <source>
        <strain>Bristol N2</strain>
    </source>
</reference>
<gene>
    <name type="primary">rps-9</name>
    <name type="ORF">F40F8.10</name>
</gene>
<proteinExistence type="evidence at protein level"/>
<organism>
    <name type="scientific">Caenorhabditis elegans</name>
    <dbReference type="NCBI Taxonomy" id="6239"/>
    <lineage>
        <taxon>Eukaryota</taxon>
        <taxon>Metazoa</taxon>
        <taxon>Ecdysozoa</taxon>
        <taxon>Nematoda</taxon>
        <taxon>Chromadorea</taxon>
        <taxon>Rhabditida</taxon>
        <taxon>Rhabditina</taxon>
        <taxon>Rhabditomorpha</taxon>
        <taxon>Rhabditoidea</taxon>
        <taxon>Rhabditidae</taxon>
        <taxon>Peloderinae</taxon>
        <taxon>Caenorhabditis</taxon>
    </lineage>
</organism>
<keyword id="KW-0002">3D-structure</keyword>
<keyword id="KW-0963">Cytoplasm</keyword>
<keyword id="KW-0539">Nucleus</keyword>
<keyword id="KW-1185">Reference proteome</keyword>
<keyword id="KW-0687">Ribonucleoprotein</keyword>
<keyword id="KW-0689">Ribosomal protein</keyword>
<keyword id="KW-0694">RNA-binding</keyword>
<keyword id="KW-0699">rRNA-binding</keyword>
<evidence type="ECO:0000250" key="1">
    <source>
        <dbReference type="UniProtKB" id="P46781"/>
    </source>
</evidence>
<evidence type="ECO:0000255" key="2">
    <source>
        <dbReference type="PROSITE-ProRule" id="PRU00182"/>
    </source>
</evidence>
<evidence type="ECO:0000256" key="3">
    <source>
        <dbReference type="SAM" id="MobiDB-lite"/>
    </source>
</evidence>
<evidence type="ECO:0000305" key="4"/>
<feature type="chain" id="PRO_0000132693" description="Small ribosomal subunit protein uS4">
    <location>
        <begin position="1"/>
        <end position="189"/>
    </location>
</feature>
<feature type="domain" description="S4 RNA-binding" evidence="2">
    <location>
        <begin position="107"/>
        <end position="181"/>
    </location>
</feature>
<feature type="region of interest" description="Disordered" evidence="3">
    <location>
        <begin position="161"/>
        <end position="189"/>
    </location>
</feature>